<comment type="function">
    <text>Is required not only for elongation of protein synthesis but also for the initiation of all mRNA translation through initiator tRNA(fMet) aminoacylation.</text>
</comment>
<comment type="catalytic activity">
    <reaction>
        <text>tRNA(Met) + L-methionine + ATP = L-methionyl-tRNA(Met) + AMP + diphosphate</text>
        <dbReference type="Rhea" id="RHEA:13481"/>
        <dbReference type="Rhea" id="RHEA-COMP:9667"/>
        <dbReference type="Rhea" id="RHEA-COMP:9698"/>
        <dbReference type="ChEBI" id="CHEBI:30616"/>
        <dbReference type="ChEBI" id="CHEBI:33019"/>
        <dbReference type="ChEBI" id="CHEBI:57844"/>
        <dbReference type="ChEBI" id="CHEBI:78442"/>
        <dbReference type="ChEBI" id="CHEBI:78530"/>
        <dbReference type="ChEBI" id="CHEBI:456215"/>
        <dbReference type="EC" id="6.1.1.10"/>
    </reaction>
</comment>
<comment type="cofactor">
    <cofactor>
        <name>Zn(2+)</name>
        <dbReference type="ChEBI" id="CHEBI:29105"/>
    </cofactor>
    <text>Binds 1 zinc ion per subunit.</text>
</comment>
<comment type="subunit">
    <text evidence="1">Homodimer.</text>
</comment>
<comment type="interaction">
    <interactant intactId="EBI-909268">
        <id>P00959</id>
    </interactant>
    <interactant intactId="EBI-543515">
        <id>P60422</id>
        <label>rplB</label>
    </interactant>
    <organismsDiffer>false</organismsDiffer>
    <experiments>2</experiments>
</comment>
<comment type="subcellular location">
    <subcellularLocation>
        <location>Cytoplasm</location>
    </subcellularLocation>
</comment>
<comment type="similarity">
    <text evidence="4">Belongs to the class-I aminoacyl-tRNA synthetase family. MetG type 1 subfamily.</text>
</comment>
<comment type="sequence caution" evidence="4">
    <conflict type="erroneous initiation">
        <sequence resource="EMBL-CDS" id="AAA60526"/>
    </conflict>
</comment>
<proteinExistence type="evidence at protein level"/>
<evidence type="ECO:0000269" key="1">
    <source>
    </source>
</evidence>
<evidence type="ECO:0000269" key="2">
    <source>
    </source>
</evidence>
<evidence type="ECO:0000269" key="3">
    <source>
    </source>
</evidence>
<evidence type="ECO:0000305" key="4"/>
<evidence type="ECO:0007829" key="5">
    <source>
        <dbReference type="PDB" id="1QQT"/>
    </source>
</evidence>
<evidence type="ECO:0007829" key="6">
    <source>
        <dbReference type="PDB" id="6SPO"/>
    </source>
</evidence>
<keyword id="KW-0002">3D-structure</keyword>
<keyword id="KW-0030">Aminoacyl-tRNA synthetase</keyword>
<keyword id="KW-0067">ATP-binding</keyword>
<keyword id="KW-0963">Cytoplasm</keyword>
<keyword id="KW-0903">Direct protein sequencing</keyword>
<keyword id="KW-0436">Ligase</keyword>
<keyword id="KW-0479">Metal-binding</keyword>
<keyword id="KW-0547">Nucleotide-binding</keyword>
<keyword id="KW-0648">Protein biosynthesis</keyword>
<keyword id="KW-1185">Reference proteome</keyword>
<keyword id="KW-0694">RNA-binding</keyword>
<keyword id="KW-0820">tRNA-binding</keyword>
<keyword id="KW-0862">Zinc</keyword>
<reference key="1">
    <citation type="journal article" date="1984" name="J. Bacteriol.">
        <title>Molecular cloning and primary structure of the Escherichia coli methionyl-tRNA synthetase gene.</title>
        <authorList>
            <person name="Dardel F."/>
            <person name="Fayat G."/>
            <person name="Blanquet S."/>
        </authorList>
    </citation>
    <scope>NUCLEOTIDE SEQUENCE [GENOMIC DNA]</scope>
</reference>
<reference key="2">
    <citation type="journal article" date="1990" name="Mol. Gen. Genet.">
        <title>Transcription and regulation of expression of the Escherichia coli methionyl-tRNA synthetase gene.</title>
        <authorList>
            <person name="Dardel F."/>
            <person name="Panvert M."/>
            <person name="Fayat G."/>
        </authorList>
    </citation>
    <scope>NUCLEOTIDE SEQUENCE [GENOMIC DNA]</scope>
    <source>
        <strain>K12</strain>
    </source>
</reference>
<reference key="3">
    <citation type="submission" date="1993-10" db="EMBL/GenBank/DDBJ databases">
        <title>Automated multiplex sequencing of the E.coli genome.</title>
        <authorList>
            <person name="Richterich P."/>
            <person name="Lakey N."/>
            <person name="Gryan G."/>
            <person name="Jaehn L."/>
            <person name="Mintz L."/>
            <person name="Robison K."/>
            <person name="Church G.M."/>
        </authorList>
    </citation>
    <scope>NUCLEOTIDE SEQUENCE [LARGE SCALE GENOMIC DNA]</scope>
    <source>
        <strain>K12 / BHB2600</strain>
    </source>
</reference>
<reference key="4">
    <citation type="journal article" date="1997" name="Science">
        <title>The complete genome sequence of Escherichia coli K-12.</title>
        <authorList>
            <person name="Blattner F.R."/>
            <person name="Plunkett G. III"/>
            <person name="Bloch C.A."/>
            <person name="Perna N.T."/>
            <person name="Burland V."/>
            <person name="Riley M."/>
            <person name="Collado-Vides J."/>
            <person name="Glasner J.D."/>
            <person name="Rode C.K."/>
            <person name="Mayhew G.F."/>
            <person name="Gregor J."/>
            <person name="Davis N.W."/>
            <person name="Kirkpatrick H.A."/>
            <person name="Goeden M.A."/>
            <person name="Rose D.J."/>
            <person name="Mau B."/>
            <person name="Shao Y."/>
        </authorList>
    </citation>
    <scope>NUCLEOTIDE SEQUENCE [LARGE SCALE GENOMIC DNA]</scope>
    <source>
        <strain>K12 / MG1655 / ATCC 47076</strain>
    </source>
</reference>
<reference key="5">
    <citation type="journal article" date="2006" name="Mol. Syst. Biol.">
        <title>Highly accurate genome sequences of Escherichia coli K-12 strains MG1655 and W3110.</title>
        <authorList>
            <person name="Hayashi K."/>
            <person name="Morooka N."/>
            <person name="Yamamoto Y."/>
            <person name="Fujita K."/>
            <person name="Isono K."/>
            <person name="Choi S."/>
            <person name="Ohtsubo E."/>
            <person name="Baba T."/>
            <person name="Wanner B.L."/>
            <person name="Mori H."/>
            <person name="Horiuchi T."/>
        </authorList>
    </citation>
    <scope>NUCLEOTIDE SEQUENCE [LARGE SCALE GENOMIC DNA]</scope>
    <source>
        <strain>K12 / W3110 / ATCC 27325 / DSM 5911</strain>
    </source>
</reference>
<reference key="6">
    <citation type="journal article" date="1982" name="Eur. J. Biochem.">
        <title>Methionyl-tRNA synthetase from Escherichia coli. Primary structure of the active crystallised tryptic fragment.</title>
        <authorList>
            <person name="Barker D.G."/>
            <person name="Ebel J.-P."/>
            <person name="Jakes R."/>
            <person name="Bruton C.J."/>
        </authorList>
    </citation>
    <scope>NUCLEOTIDE SEQUENCE [GENOMIC DNA] OF 1-566</scope>
    <scope>PARTIAL PROTEIN SEQUENCE</scope>
</reference>
<reference key="7">
    <citation type="journal article" date="1997" name="Electrophoresis">
        <title>Escherichia coli proteome analysis using the gene-protein database.</title>
        <authorList>
            <person name="VanBogelen R.A."/>
            <person name="Abshire K.Z."/>
            <person name="Moldover B."/>
            <person name="Olson E.R."/>
            <person name="Neidhardt F.C."/>
        </authorList>
    </citation>
    <scope>IDENTIFICATION BY 2D-GEL</scope>
</reference>
<reference key="8">
    <citation type="journal article" date="1982" name="J. Mol. Biol.">
        <title>Crystal structure of Escherichia coli methionyl-tRNA synthetase at 2.5-A resolution.</title>
        <authorList>
            <person name="Zelwer C."/>
            <person name="Risler J.-L."/>
            <person name="Brunie S."/>
        </authorList>
    </citation>
    <scope>X-RAY CRYSTALLOGRAPHY (2.5 ANGSTROMS)</scope>
</reference>
<reference key="9">
    <citation type="journal article" date="1990" name="J. Mol. Biol.">
        <title>Crystallographic study at 2.5-A resolution of the interaction of methionyl-tRNA synthetase from Escherichia coli with ATP.</title>
        <authorList>
            <person name="Brunie S."/>
            <person name="Zelwer C."/>
            <person name="Risler J.-L."/>
        </authorList>
    </citation>
    <scope>X-RAY CRYSTALLOGRAPHY (2.5 ANGSTROMS)</scope>
</reference>
<reference key="10">
    <citation type="journal article" date="1999" name="J. Mol. Biol.">
        <title>Crystal structure of Escherichia coli methionyl-tRNA synthetase highlights species-specific features.</title>
        <authorList>
            <person name="Mechulam Y."/>
            <person name="Schmitt E."/>
            <person name="Maveyraud L."/>
            <person name="Zelwer C."/>
            <person name="Nureki O."/>
            <person name="Yokoyama S."/>
            <person name="Konno M."/>
            <person name="Blanquet S."/>
        </authorList>
    </citation>
    <scope>X-RAY CRYSTALLOGRAPHY (2.03 ANGSTROMS) OF 1-553</scope>
</reference>
<reference key="11">
    <citation type="journal article" date="2001" name="J. Mol. Biol.">
        <title>How methionyl-tRNA synthetase creates its amino acid recognition pocket upon L-methionine binding.</title>
        <authorList>
            <person name="Serre L."/>
            <person name="Verdon G."/>
            <person name="Choinowski T."/>
            <person name="Hervouet N."/>
            <person name="Risler J.-L."/>
            <person name="Zelwer C."/>
        </authorList>
    </citation>
    <scope>X-RAY CRYSTALLOGRAPHY (1.85 ANGSTROMS) OF 1-552 IN COMPLEX WITH L-METHIONINE</scope>
</reference>
<reference key="12">
    <citation type="journal article" date="1993" name="J. Mol. Biol.">
        <title>Methionyl-tRNA synthetase zinc binding domain. Three-dimensional structure and homology with rubredoxin and gag retroviral proteins.</title>
        <authorList>
            <person name="Fourmy D."/>
            <person name="Dardel F."/>
            <person name="Blanquet S."/>
        </authorList>
    </citation>
    <scope>STRUCTURE BY NMR OF 139-164</scope>
</reference>
<reference key="13">
    <citation type="journal article" date="1990" name="Biochemistry">
        <title>Mapping of the active site of Escherichia coli methionyl-tRNA synthetase: identification of amino acid residues labeled by periodate-oxidized tRNA(fMet) molecules having modified lengths at the 3'-acceptor end.</title>
        <authorList>
            <person name="Hountondji C."/>
            <person name="Schmitter J.-M."/>
            <person name="Beauvallet C."/>
            <person name="Blanquet S."/>
        </authorList>
    </citation>
    <scope>MAPPING OF SUBSTRATE-BINDING SITES</scope>
</reference>
<reference key="14">
    <citation type="journal article" date="1990" name="Biochimie">
        <title>Methionyl-tRNA synthetase from E. coli -- a review.</title>
        <authorList>
            <person name="Meinnel T."/>
            <person name="Mechulam Y."/>
            <person name="Dardel F."/>
            <person name="Schmitter J.-M."/>
            <person name="Hountondji C."/>
            <person name="Brunie S."/>
            <person name="Dessen P."/>
            <person name="Fayat G."/>
            <person name="Blanquet S."/>
        </authorList>
    </citation>
    <scope>REVIEW</scope>
</reference>
<reference key="15">
    <citation type="journal article" date="1991" name="FEBS Lett.">
        <title>Identification of residues involved in the binding of methionine by Escherichia coli methionyl-tRNA synthetase.</title>
        <authorList>
            <person name="Fourmy D."/>
            <person name="Mechulam Y."/>
            <person name="Brunie S."/>
            <person name="Blanquet S."/>
            <person name="Fayat G."/>
        </authorList>
    </citation>
    <scope>MUTAGENESIS</scope>
</reference>
<reference key="16">
    <citation type="journal article" date="1993" name="J. Mol. Biol.">
        <title>Mapping of the zinc binding domain of Escherichia coli methionyl-tRNA synthetase.</title>
        <authorList>
            <person name="Fourmy D."/>
            <person name="Meinnel T."/>
            <person name="Mechulam Y."/>
            <person name="Blanquet S."/>
        </authorList>
    </citation>
    <scope>MUTAGENESIS OF ZINC LIGANDS</scope>
</reference>
<organism>
    <name type="scientific">Escherichia coli (strain K12)</name>
    <dbReference type="NCBI Taxonomy" id="83333"/>
    <lineage>
        <taxon>Bacteria</taxon>
        <taxon>Pseudomonadati</taxon>
        <taxon>Pseudomonadota</taxon>
        <taxon>Gammaproteobacteria</taxon>
        <taxon>Enterobacterales</taxon>
        <taxon>Enterobacteriaceae</taxon>
        <taxon>Escherichia</taxon>
    </lineage>
</organism>
<name>SYM_ECOLI</name>
<gene>
    <name type="primary">metG</name>
    <name type="ordered locus">b2114</name>
    <name type="ordered locus">JW2101</name>
</gene>
<dbReference type="EC" id="6.1.1.10"/>
<dbReference type="EMBL" id="K02671">
    <property type="protein sequence ID" value="AAA24161.1"/>
    <property type="molecule type" value="Genomic_DNA"/>
</dbReference>
<dbReference type="EMBL" id="X55791">
    <property type="protein sequence ID" value="CAA39315.1"/>
    <property type="molecule type" value="Genomic_DNA"/>
</dbReference>
<dbReference type="EMBL" id="U00007">
    <property type="protein sequence ID" value="AAA60526.1"/>
    <property type="status" value="ALT_INIT"/>
    <property type="molecule type" value="Genomic_DNA"/>
</dbReference>
<dbReference type="EMBL" id="U00096">
    <property type="protein sequence ID" value="AAC75175.1"/>
    <property type="molecule type" value="Genomic_DNA"/>
</dbReference>
<dbReference type="EMBL" id="AP009048">
    <property type="protein sequence ID" value="BAE76592.1"/>
    <property type="molecule type" value="Genomic_DNA"/>
</dbReference>
<dbReference type="PIR" id="S14427">
    <property type="entry name" value="SYECMT"/>
</dbReference>
<dbReference type="RefSeq" id="NP_416617.1">
    <property type="nucleotide sequence ID" value="NC_000913.3"/>
</dbReference>
<dbReference type="RefSeq" id="WP_001350533.1">
    <property type="nucleotide sequence ID" value="NZ_LN832404.1"/>
</dbReference>
<dbReference type="PDB" id="1F4L">
    <property type="method" value="X-ray"/>
    <property type="resolution" value="1.85 A"/>
    <property type="chains" value="A=1-551"/>
</dbReference>
<dbReference type="PDB" id="1MEA">
    <property type="method" value="NMR"/>
    <property type="chains" value="A=139-164"/>
</dbReference>
<dbReference type="PDB" id="1MED">
    <property type="method" value="NMR"/>
    <property type="chains" value="A=139-164"/>
</dbReference>
<dbReference type="PDB" id="1P7P">
    <property type="method" value="X-ray"/>
    <property type="resolution" value="1.80 A"/>
    <property type="chains" value="A=2-552"/>
</dbReference>
<dbReference type="PDB" id="1PFU">
    <property type="method" value="X-ray"/>
    <property type="resolution" value="1.91 A"/>
    <property type="chains" value="A=2-552"/>
</dbReference>
<dbReference type="PDB" id="1PFV">
    <property type="method" value="X-ray"/>
    <property type="resolution" value="1.70 A"/>
    <property type="chains" value="A=2-552"/>
</dbReference>
<dbReference type="PDB" id="1PFW">
    <property type="method" value="X-ray"/>
    <property type="resolution" value="1.78 A"/>
    <property type="chains" value="A=2-552"/>
</dbReference>
<dbReference type="PDB" id="1PFY">
    <property type="method" value="X-ray"/>
    <property type="resolution" value="1.93 A"/>
    <property type="chains" value="A=2-552"/>
</dbReference>
<dbReference type="PDB" id="1PG0">
    <property type="method" value="X-ray"/>
    <property type="resolution" value="1.90 A"/>
    <property type="chains" value="A=2-552"/>
</dbReference>
<dbReference type="PDB" id="1PG2">
    <property type="method" value="X-ray"/>
    <property type="resolution" value="1.75 A"/>
    <property type="chains" value="A=2-552"/>
</dbReference>
<dbReference type="PDB" id="1QQT">
    <property type="method" value="X-ray"/>
    <property type="resolution" value="2.03 A"/>
    <property type="chains" value="A=2-552"/>
</dbReference>
<dbReference type="PDB" id="3H97">
    <property type="method" value="X-ray"/>
    <property type="resolution" value="1.70 A"/>
    <property type="chains" value="A=1-548"/>
</dbReference>
<dbReference type="PDB" id="3H99">
    <property type="method" value="X-ray"/>
    <property type="resolution" value="1.40 A"/>
    <property type="chains" value="A=1-548"/>
</dbReference>
<dbReference type="PDB" id="3H9B">
    <property type="method" value="X-ray"/>
    <property type="resolution" value="1.50 A"/>
    <property type="chains" value="A=1-548"/>
</dbReference>
<dbReference type="PDB" id="3H9C">
    <property type="method" value="X-ray"/>
    <property type="resolution" value="1.40 A"/>
    <property type="chains" value="A=2-548"/>
</dbReference>
<dbReference type="PDB" id="6SPN">
    <property type="method" value="X-ray"/>
    <property type="resolution" value="1.45 A"/>
    <property type="chains" value="A=2-548"/>
</dbReference>
<dbReference type="PDB" id="6SPO">
    <property type="method" value="X-ray"/>
    <property type="resolution" value="1.20 A"/>
    <property type="chains" value="A=2-548"/>
</dbReference>
<dbReference type="PDB" id="6SPP">
    <property type="method" value="X-ray"/>
    <property type="resolution" value="1.49 A"/>
    <property type="chains" value="A=2-548"/>
</dbReference>
<dbReference type="PDB" id="6SPQ">
    <property type="method" value="X-ray"/>
    <property type="resolution" value="1.38 A"/>
    <property type="chains" value="A=2-548"/>
</dbReference>
<dbReference type="PDB" id="6SPR">
    <property type="method" value="X-ray"/>
    <property type="resolution" value="1.48 A"/>
    <property type="chains" value="A=2-548"/>
</dbReference>
<dbReference type="PDB" id="8BRU">
    <property type="method" value="X-ray"/>
    <property type="resolution" value="1.55 A"/>
    <property type="chains" value="A=2-548"/>
</dbReference>
<dbReference type="PDB" id="8BRV">
    <property type="method" value="X-ray"/>
    <property type="resolution" value="1.53 A"/>
    <property type="chains" value="A=2-548"/>
</dbReference>
<dbReference type="PDB" id="8BRW">
    <property type="method" value="X-ray"/>
    <property type="resolution" value="1.73 A"/>
    <property type="chains" value="A=2-548"/>
</dbReference>
<dbReference type="PDB" id="8BRX">
    <property type="method" value="X-ray"/>
    <property type="resolution" value="1.54 A"/>
    <property type="chains" value="A=2-548"/>
</dbReference>
<dbReference type="PDBsum" id="1F4L"/>
<dbReference type="PDBsum" id="1MEA"/>
<dbReference type="PDBsum" id="1MED"/>
<dbReference type="PDBsum" id="1P7P"/>
<dbReference type="PDBsum" id="1PFU"/>
<dbReference type="PDBsum" id="1PFV"/>
<dbReference type="PDBsum" id="1PFW"/>
<dbReference type="PDBsum" id="1PFY"/>
<dbReference type="PDBsum" id="1PG0"/>
<dbReference type="PDBsum" id="1PG2"/>
<dbReference type="PDBsum" id="1QQT"/>
<dbReference type="PDBsum" id="3H97"/>
<dbReference type="PDBsum" id="3H99"/>
<dbReference type="PDBsum" id="3H9B"/>
<dbReference type="PDBsum" id="3H9C"/>
<dbReference type="PDBsum" id="6SPN"/>
<dbReference type="PDBsum" id="6SPO"/>
<dbReference type="PDBsum" id="6SPP"/>
<dbReference type="PDBsum" id="6SPQ"/>
<dbReference type="PDBsum" id="6SPR"/>
<dbReference type="PDBsum" id="8BRU"/>
<dbReference type="PDBsum" id="8BRV"/>
<dbReference type="PDBsum" id="8BRW"/>
<dbReference type="PDBsum" id="8BRX"/>
<dbReference type="SMR" id="P00959"/>
<dbReference type="BioGRID" id="4259174">
    <property type="interactions" value="19"/>
</dbReference>
<dbReference type="BioGRID" id="850988">
    <property type="interactions" value="2"/>
</dbReference>
<dbReference type="DIP" id="DIP-10194N"/>
<dbReference type="FunCoup" id="P00959">
    <property type="interactions" value="892"/>
</dbReference>
<dbReference type="IntAct" id="P00959">
    <property type="interactions" value="4"/>
</dbReference>
<dbReference type="STRING" id="511145.b2114"/>
<dbReference type="BindingDB" id="P00959"/>
<dbReference type="ChEMBL" id="CHEMBL3367"/>
<dbReference type="DrugBank" id="DB02229">
    <property type="generic name" value="5'-O-[(L-methionyl)-sulphamoyl]adenosine"/>
</dbReference>
<dbReference type="DrugBank" id="DB03816">
    <property type="generic name" value="Difluoromethionine"/>
</dbReference>
<dbReference type="DrugBank" id="DB04015">
    <property type="generic name" value="Methionine Phosphinate"/>
</dbReference>
<dbReference type="DrugBank" id="DB02151">
    <property type="generic name" value="Methionine Phosphonate"/>
</dbReference>
<dbReference type="DrugBank" id="DB03799">
    <property type="generic name" value="Trifluoromethionine"/>
</dbReference>
<dbReference type="jPOST" id="P00959"/>
<dbReference type="PaxDb" id="511145-b2114"/>
<dbReference type="EnsemblBacteria" id="AAC75175">
    <property type="protein sequence ID" value="AAC75175"/>
    <property type="gene ID" value="b2114"/>
</dbReference>
<dbReference type="GeneID" id="946643"/>
<dbReference type="KEGG" id="ecj:JW2101"/>
<dbReference type="KEGG" id="eco:b2114"/>
<dbReference type="KEGG" id="ecoc:C3026_11860"/>
<dbReference type="PATRIC" id="fig|1411691.4.peg.133"/>
<dbReference type="EchoBASE" id="EB0581"/>
<dbReference type="eggNOG" id="COG0073">
    <property type="taxonomic scope" value="Bacteria"/>
</dbReference>
<dbReference type="eggNOG" id="COG0143">
    <property type="taxonomic scope" value="Bacteria"/>
</dbReference>
<dbReference type="HOGENOM" id="CLU_009710_7_0_6"/>
<dbReference type="InParanoid" id="P00959"/>
<dbReference type="OMA" id="NMFLPDR"/>
<dbReference type="OrthoDB" id="9810191at2"/>
<dbReference type="PhylomeDB" id="P00959"/>
<dbReference type="BioCyc" id="EcoCyc:METG-MONOMER"/>
<dbReference type="BioCyc" id="MetaCyc:METG-MONOMER"/>
<dbReference type="BRENDA" id="6.1.1.10">
    <property type="organism ID" value="2026"/>
</dbReference>
<dbReference type="EvolutionaryTrace" id="P00959"/>
<dbReference type="PRO" id="PR:P00959"/>
<dbReference type="Proteomes" id="UP000000625">
    <property type="component" value="Chromosome"/>
</dbReference>
<dbReference type="GO" id="GO:0005829">
    <property type="term" value="C:cytosol"/>
    <property type="evidence" value="ECO:0007005"/>
    <property type="project" value="UniProtKB"/>
</dbReference>
<dbReference type="GO" id="GO:0016020">
    <property type="term" value="C:membrane"/>
    <property type="evidence" value="ECO:0007005"/>
    <property type="project" value="UniProtKB"/>
</dbReference>
<dbReference type="GO" id="GO:0005524">
    <property type="term" value="F:ATP binding"/>
    <property type="evidence" value="ECO:0007669"/>
    <property type="project" value="UniProtKB-UniRule"/>
</dbReference>
<dbReference type="GO" id="GO:0004825">
    <property type="term" value="F:methionine-tRNA ligase activity"/>
    <property type="evidence" value="ECO:0000314"/>
    <property type="project" value="EcoCyc"/>
</dbReference>
<dbReference type="GO" id="GO:0042803">
    <property type="term" value="F:protein homodimerization activity"/>
    <property type="evidence" value="ECO:0000314"/>
    <property type="project" value="EcoCyc"/>
</dbReference>
<dbReference type="GO" id="GO:0000049">
    <property type="term" value="F:tRNA binding"/>
    <property type="evidence" value="ECO:0007669"/>
    <property type="project" value="UniProtKB-KW"/>
</dbReference>
<dbReference type="GO" id="GO:0008270">
    <property type="term" value="F:zinc ion binding"/>
    <property type="evidence" value="ECO:0000314"/>
    <property type="project" value="EcoCyc"/>
</dbReference>
<dbReference type="GO" id="GO:0006431">
    <property type="term" value="P:methionyl-tRNA aminoacylation"/>
    <property type="evidence" value="ECO:0000315"/>
    <property type="project" value="EcoCyc"/>
</dbReference>
<dbReference type="CDD" id="cd07957">
    <property type="entry name" value="Anticodon_Ia_Met"/>
    <property type="match status" value="1"/>
</dbReference>
<dbReference type="CDD" id="cd00814">
    <property type="entry name" value="MetRS_core"/>
    <property type="match status" value="1"/>
</dbReference>
<dbReference type="CDD" id="cd02800">
    <property type="entry name" value="tRNA_bind_EcMetRS_like"/>
    <property type="match status" value="1"/>
</dbReference>
<dbReference type="FunFam" id="1.10.730.10:FF:000005">
    <property type="entry name" value="Methionine--tRNA ligase"/>
    <property type="match status" value="1"/>
</dbReference>
<dbReference type="FunFam" id="2.20.28.20:FF:000001">
    <property type="entry name" value="Methionine--tRNA ligase"/>
    <property type="match status" value="1"/>
</dbReference>
<dbReference type="FunFam" id="2.40.50.140:FF:000042">
    <property type="entry name" value="Methionine--tRNA ligase"/>
    <property type="match status" value="1"/>
</dbReference>
<dbReference type="Gene3D" id="3.40.50.620">
    <property type="entry name" value="HUPs"/>
    <property type="match status" value="1"/>
</dbReference>
<dbReference type="Gene3D" id="1.10.730.10">
    <property type="entry name" value="Isoleucyl-tRNA Synthetase, Domain 1"/>
    <property type="match status" value="1"/>
</dbReference>
<dbReference type="Gene3D" id="2.20.28.20">
    <property type="entry name" value="Methionyl-tRNA synthetase, Zn-domain"/>
    <property type="match status" value="1"/>
</dbReference>
<dbReference type="Gene3D" id="2.40.50.140">
    <property type="entry name" value="Nucleic acid-binding proteins"/>
    <property type="match status" value="1"/>
</dbReference>
<dbReference type="HAMAP" id="MF_00098">
    <property type="entry name" value="Met_tRNA_synth_type1"/>
    <property type="match status" value="1"/>
</dbReference>
<dbReference type="InterPro" id="IPR001412">
    <property type="entry name" value="aa-tRNA-synth_I_CS"/>
</dbReference>
<dbReference type="InterPro" id="IPR041872">
    <property type="entry name" value="Anticodon_Met"/>
</dbReference>
<dbReference type="InterPro" id="IPR004495">
    <property type="entry name" value="Met-tRNA-synth_bsu_C"/>
</dbReference>
<dbReference type="InterPro" id="IPR023458">
    <property type="entry name" value="Met-tRNA_ligase_1"/>
</dbReference>
<dbReference type="InterPro" id="IPR014758">
    <property type="entry name" value="Met-tRNA_synth"/>
</dbReference>
<dbReference type="InterPro" id="IPR015413">
    <property type="entry name" value="Methionyl/Leucyl_tRNA_Synth"/>
</dbReference>
<dbReference type="InterPro" id="IPR033911">
    <property type="entry name" value="MetRS_core"/>
</dbReference>
<dbReference type="InterPro" id="IPR029038">
    <property type="entry name" value="MetRS_Zn"/>
</dbReference>
<dbReference type="InterPro" id="IPR012340">
    <property type="entry name" value="NA-bd_OB-fold"/>
</dbReference>
<dbReference type="InterPro" id="IPR014729">
    <property type="entry name" value="Rossmann-like_a/b/a_fold"/>
</dbReference>
<dbReference type="InterPro" id="IPR002547">
    <property type="entry name" value="tRNA-bd_dom"/>
</dbReference>
<dbReference type="InterPro" id="IPR009080">
    <property type="entry name" value="tRNAsynth_Ia_anticodon-bd"/>
</dbReference>
<dbReference type="NCBIfam" id="TIGR00398">
    <property type="entry name" value="metG"/>
    <property type="match status" value="1"/>
</dbReference>
<dbReference type="NCBIfam" id="TIGR00399">
    <property type="entry name" value="metG_C_term"/>
    <property type="match status" value="1"/>
</dbReference>
<dbReference type="NCBIfam" id="NF001100">
    <property type="entry name" value="PRK00133.1"/>
    <property type="match status" value="1"/>
</dbReference>
<dbReference type="PANTHER" id="PTHR45765">
    <property type="entry name" value="METHIONINE--TRNA LIGASE"/>
    <property type="match status" value="1"/>
</dbReference>
<dbReference type="PANTHER" id="PTHR45765:SF1">
    <property type="entry name" value="METHIONINE--TRNA LIGASE, CYTOPLASMIC"/>
    <property type="match status" value="1"/>
</dbReference>
<dbReference type="Pfam" id="PF19303">
    <property type="entry name" value="Anticodon_3"/>
    <property type="match status" value="1"/>
</dbReference>
<dbReference type="Pfam" id="PF09334">
    <property type="entry name" value="tRNA-synt_1g"/>
    <property type="match status" value="1"/>
</dbReference>
<dbReference type="Pfam" id="PF01588">
    <property type="entry name" value="tRNA_bind"/>
    <property type="match status" value="1"/>
</dbReference>
<dbReference type="PRINTS" id="PR01041">
    <property type="entry name" value="TRNASYNTHMET"/>
</dbReference>
<dbReference type="SUPFAM" id="SSF47323">
    <property type="entry name" value="Anticodon-binding domain of a subclass of class I aminoacyl-tRNA synthetases"/>
    <property type="match status" value="1"/>
</dbReference>
<dbReference type="SUPFAM" id="SSF57770">
    <property type="entry name" value="Methionyl-tRNA synthetase (MetRS), Zn-domain"/>
    <property type="match status" value="1"/>
</dbReference>
<dbReference type="SUPFAM" id="SSF50249">
    <property type="entry name" value="Nucleic acid-binding proteins"/>
    <property type="match status" value="1"/>
</dbReference>
<dbReference type="SUPFAM" id="SSF52374">
    <property type="entry name" value="Nucleotidylyl transferase"/>
    <property type="match status" value="1"/>
</dbReference>
<dbReference type="PROSITE" id="PS00178">
    <property type="entry name" value="AA_TRNA_LIGASE_I"/>
    <property type="match status" value="1"/>
</dbReference>
<dbReference type="PROSITE" id="PS50886">
    <property type="entry name" value="TRBD"/>
    <property type="match status" value="1"/>
</dbReference>
<protein>
    <recommendedName>
        <fullName>Methionine--tRNA ligase</fullName>
        <ecNumber>6.1.1.10</ecNumber>
    </recommendedName>
    <alternativeName>
        <fullName>Methionyl-tRNA synthetase</fullName>
        <shortName>MetRS</shortName>
    </alternativeName>
</protein>
<feature type="initiator methionine" description="Removed">
    <location>
        <position position="1"/>
    </location>
</feature>
<feature type="chain" id="PRO_0000139129" description="Methionine--tRNA ligase">
    <location>
        <begin position="2"/>
        <end position="677"/>
    </location>
</feature>
<feature type="domain" description="tRNA-binding">
    <location>
        <begin position="575"/>
        <end position="677"/>
    </location>
</feature>
<feature type="short sequence motif" description="'HIGH' region">
    <location>
        <begin position="15"/>
        <end position="25"/>
    </location>
</feature>
<feature type="short sequence motif" description="'KMSKS' region">
    <location>
        <begin position="333"/>
        <end position="337"/>
    </location>
</feature>
<feature type="binding site">
    <location>
        <position position="146"/>
    </location>
    <ligand>
        <name>Zn(2+)</name>
        <dbReference type="ChEBI" id="CHEBI:29105"/>
    </ligand>
</feature>
<feature type="binding site">
    <location>
        <position position="149"/>
    </location>
    <ligand>
        <name>Zn(2+)</name>
        <dbReference type="ChEBI" id="CHEBI:29105"/>
    </ligand>
</feature>
<feature type="binding site">
    <location>
        <position position="159"/>
    </location>
    <ligand>
        <name>Zn(2+)</name>
        <dbReference type="ChEBI" id="CHEBI:29105"/>
    </ligand>
</feature>
<feature type="binding site">
    <location>
        <position position="162"/>
    </location>
    <ligand>
        <name>Zn(2+)</name>
        <dbReference type="ChEBI" id="CHEBI:29105"/>
    </ligand>
</feature>
<feature type="binding site">
    <location>
        <position position="336"/>
    </location>
    <ligand>
        <name>ATP</name>
        <dbReference type="ChEBI" id="CHEBI:30616"/>
    </ligand>
</feature>
<feature type="mutagenesis site" description="Loss of activity." evidence="2 3">
    <original>K</original>
    <variation>Q</variation>
    <variation>A</variation>
    <variation>E</variation>
    <variation>R</variation>
    <location>
        <position position="336"/>
    </location>
</feature>
<feature type="strand" evidence="6">
    <location>
        <begin position="7"/>
        <end position="12"/>
    </location>
</feature>
<feature type="strand" evidence="5">
    <location>
        <begin position="16"/>
        <end position="19"/>
    </location>
</feature>
<feature type="helix" evidence="6">
    <location>
        <begin position="23"/>
        <end position="41"/>
    </location>
</feature>
<feature type="strand" evidence="6">
    <location>
        <begin position="45"/>
        <end position="53"/>
    </location>
</feature>
<feature type="helix" evidence="6">
    <location>
        <begin position="57"/>
        <end position="66"/>
    </location>
</feature>
<feature type="helix" evidence="6">
    <location>
        <begin position="70"/>
        <end position="87"/>
    </location>
</feature>
<feature type="strand" evidence="6">
    <location>
        <begin position="93"/>
        <end position="100"/>
    </location>
</feature>
<feature type="helix" evidence="6">
    <location>
        <begin position="101"/>
        <end position="116"/>
    </location>
</feature>
<feature type="strand" evidence="6">
    <location>
        <begin position="120"/>
        <end position="130"/>
    </location>
</feature>
<feature type="turn" evidence="6">
    <location>
        <begin position="131"/>
        <end position="134"/>
    </location>
</feature>
<feature type="helix" evidence="6">
    <location>
        <begin position="139"/>
        <end position="141"/>
    </location>
</feature>
<feature type="strand" evidence="6">
    <location>
        <begin position="142"/>
        <end position="145"/>
    </location>
</feature>
<feature type="turn" evidence="6">
    <location>
        <begin position="147"/>
        <end position="149"/>
    </location>
</feature>
<feature type="strand" evidence="6">
    <location>
        <begin position="152"/>
        <end position="155"/>
    </location>
</feature>
<feature type="turn" evidence="6">
    <location>
        <begin position="160"/>
        <end position="162"/>
    </location>
</feature>
<feature type="helix" evidence="6">
    <location>
        <begin position="168"/>
        <end position="170"/>
    </location>
</feature>
<feature type="strand" evidence="6">
    <location>
        <begin position="172"/>
        <end position="176"/>
    </location>
</feature>
<feature type="turn" evidence="6">
    <location>
        <begin position="177"/>
        <end position="179"/>
    </location>
</feature>
<feature type="strand" evidence="6">
    <location>
        <begin position="184"/>
        <end position="193"/>
    </location>
</feature>
<feature type="helix" evidence="6">
    <location>
        <begin position="195"/>
        <end position="198"/>
    </location>
</feature>
<feature type="helix" evidence="6">
    <location>
        <begin position="199"/>
        <end position="207"/>
    </location>
</feature>
<feature type="helix" evidence="6">
    <location>
        <begin position="213"/>
        <end position="225"/>
    </location>
</feature>
<feature type="strand" evidence="6">
    <location>
        <begin position="233"/>
        <end position="237"/>
    </location>
</feature>
<feature type="strand" evidence="6">
    <location>
        <begin position="249"/>
        <end position="251"/>
    </location>
</feature>
<feature type="helix" evidence="6">
    <location>
        <begin position="253"/>
        <end position="272"/>
    </location>
</feature>
<feature type="helix" evidence="6">
    <location>
        <begin position="277"/>
        <end position="282"/>
    </location>
</feature>
<feature type="strand" evidence="6">
    <location>
        <begin position="288"/>
        <end position="295"/>
    </location>
</feature>
<feature type="helix" evidence="6">
    <location>
        <begin position="296"/>
        <end position="298"/>
    </location>
</feature>
<feature type="helix" evidence="6">
    <location>
        <begin position="299"/>
        <end position="303"/>
    </location>
</feature>
<feature type="helix" evidence="6">
    <location>
        <begin position="305"/>
        <end position="312"/>
    </location>
</feature>
<feature type="strand" evidence="6">
    <location>
        <begin position="319"/>
        <end position="324"/>
    </location>
</feature>
<feature type="strand" evidence="6">
    <location>
        <begin position="327"/>
        <end position="329"/>
    </location>
</feature>
<feature type="turn" evidence="6">
    <location>
        <begin position="336"/>
        <end position="339"/>
    </location>
</feature>
<feature type="helix" evidence="6">
    <location>
        <begin position="344"/>
        <end position="350"/>
    </location>
</feature>
<feature type="helix" evidence="6">
    <location>
        <begin position="353"/>
        <end position="363"/>
    </location>
</feature>
<feature type="strand" evidence="6">
    <location>
        <begin position="371"/>
        <end position="373"/>
    </location>
</feature>
<feature type="helix" evidence="6">
    <location>
        <begin position="375"/>
        <end position="385"/>
    </location>
</feature>
<feature type="turn" evidence="6">
    <location>
        <begin position="386"/>
        <end position="389"/>
    </location>
</feature>
<feature type="helix" evidence="6">
    <location>
        <begin position="390"/>
        <end position="395"/>
    </location>
</feature>
<feature type="helix" evidence="6">
    <location>
        <begin position="398"/>
        <end position="404"/>
    </location>
</feature>
<feature type="helix" evidence="6">
    <location>
        <begin position="416"/>
        <end position="424"/>
    </location>
</feature>
<feature type="helix" evidence="6">
    <location>
        <begin position="426"/>
        <end position="434"/>
    </location>
</feature>
<feature type="helix" evidence="6">
    <location>
        <begin position="438"/>
        <end position="459"/>
    </location>
</feature>
<feature type="helix" evidence="6">
    <location>
        <begin position="461"/>
        <end position="464"/>
    </location>
</feature>
<feature type="helix" evidence="6">
    <location>
        <begin position="471"/>
        <end position="492"/>
    </location>
</feature>
<feature type="turn" evidence="6">
    <location>
        <begin position="493"/>
        <end position="495"/>
    </location>
</feature>
<feature type="helix" evidence="6">
    <location>
        <begin position="497"/>
        <end position="507"/>
    </location>
</feature>
<feature type="helix" evidence="6">
    <location>
        <begin position="514"/>
        <end position="517"/>
    </location>
</feature>
<feature type="helix" evidence="6">
    <location>
        <begin position="537"/>
        <end position="547"/>
    </location>
</feature>
<sequence length="677" mass="76255">MTQVAKKILVTCALPYANGSIHLGHMLEHIQADVWVRYQRMRGHEVNFICADDAHGTPIMLKAQQLGITPEQMIGEMSQEHQTDFAGFNISYDNYHSTHSEENRQLSELIYSRLKENGFIKNRTISQLYDPEKGMFLPDRFVKGTCPKCKSPDQYGDNCEVCGATYSPTELIEPKSVVSGATPVMRDSEHFFFDLPSFSEMLQAWTRSGALQEQVANKMQEWFESGLQQWDISRDAPYFGFEIPNAPGKYFYVWLDAPIGYMGSFKNLCDKRGDSVSFDEYWKKDSTAELYHFIGKDIVYFHSLFWPAMLEGSNFRKPSNLFVHGYVTVNGAKMSKSRGTFIKASTWLNHFDADSLRYYYTAKLSSRIDDIDLNLEDFVQRVNADIVNKVVNLASRNAGFINKRFDGVLASELADPQLYKTFTDAAEVIGEAWESREFGKAVREIMALADLANRYVDEQAPWVVAKQEGRDADLQAICSMGINLFRVLMTYLKPVLPKLTERAEAFLNTELTWDGIQQPLLGHKVNPFKALYNRIDMRQVEALVEASKEEVKAAAAPVTGPLADDPIQETITFDDFAKVDLRVALIENAEFVEGSDKLLRLTLDLGGEKRNVFSGIRSAYPDPQALIGRHTIMVANLAPRKMRFGISEGMVMAAGPGGKDIFLLSPDAGAKPGHQVK</sequence>
<accession>P00959</accession>
<accession>Q2MAW4</accession>